<evidence type="ECO:0000255" key="1">
    <source>
        <dbReference type="HAMAP-Rule" id="MF_01148"/>
    </source>
</evidence>
<reference key="1">
    <citation type="submission" date="2003-06" db="EMBL/GenBank/DDBJ databases">
        <title>The complete genome sequence of Haemophilus ducreyi.</title>
        <authorList>
            <person name="Munson R.S. Jr."/>
            <person name="Ray W.C."/>
            <person name="Mahairas G."/>
            <person name="Sabo P."/>
            <person name="Mungur R."/>
            <person name="Johnson L."/>
            <person name="Nguyen D."/>
            <person name="Wang J."/>
            <person name="Forst C."/>
            <person name="Hood L."/>
        </authorList>
    </citation>
    <scope>NUCLEOTIDE SEQUENCE [LARGE SCALE GENOMIC DNA]</scope>
    <source>
        <strain>35000HP / ATCC 700724</strain>
    </source>
</reference>
<name>LNT_HAEDU</name>
<organism>
    <name type="scientific">Haemophilus ducreyi (strain 35000HP / ATCC 700724)</name>
    <dbReference type="NCBI Taxonomy" id="233412"/>
    <lineage>
        <taxon>Bacteria</taxon>
        <taxon>Pseudomonadati</taxon>
        <taxon>Pseudomonadota</taxon>
        <taxon>Gammaproteobacteria</taxon>
        <taxon>Pasteurellales</taxon>
        <taxon>Pasteurellaceae</taxon>
        <taxon>Haemophilus</taxon>
    </lineage>
</organism>
<keyword id="KW-0012">Acyltransferase</keyword>
<keyword id="KW-0997">Cell inner membrane</keyword>
<keyword id="KW-1003">Cell membrane</keyword>
<keyword id="KW-0472">Membrane</keyword>
<keyword id="KW-1185">Reference proteome</keyword>
<keyword id="KW-0808">Transferase</keyword>
<keyword id="KW-0812">Transmembrane</keyword>
<keyword id="KW-1133">Transmembrane helix</keyword>
<accession>Q7VM56</accession>
<dbReference type="EC" id="2.3.1.269" evidence="1"/>
<dbReference type="EMBL" id="AE017143">
    <property type="protein sequence ID" value="AAP96005.1"/>
    <property type="molecule type" value="Genomic_DNA"/>
</dbReference>
<dbReference type="RefSeq" id="WP_010945054.1">
    <property type="nucleotide sequence ID" value="NC_002940.2"/>
</dbReference>
<dbReference type="SMR" id="Q7VM56"/>
<dbReference type="STRING" id="233412.HD_1144"/>
<dbReference type="KEGG" id="hdu:HD_1144"/>
<dbReference type="eggNOG" id="COG0815">
    <property type="taxonomic scope" value="Bacteria"/>
</dbReference>
<dbReference type="HOGENOM" id="CLU_019563_3_0_6"/>
<dbReference type="OrthoDB" id="9804277at2"/>
<dbReference type="UniPathway" id="UPA00666"/>
<dbReference type="Proteomes" id="UP000001022">
    <property type="component" value="Chromosome"/>
</dbReference>
<dbReference type="GO" id="GO:0005886">
    <property type="term" value="C:plasma membrane"/>
    <property type="evidence" value="ECO:0007669"/>
    <property type="project" value="UniProtKB-SubCell"/>
</dbReference>
<dbReference type="GO" id="GO:0016410">
    <property type="term" value="F:N-acyltransferase activity"/>
    <property type="evidence" value="ECO:0007669"/>
    <property type="project" value="UniProtKB-UniRule"/>
</dbReference>
<dbReference type="GO" id="GO:0042158">
    <property type="term" value="P:lipoprotein biosynthetic process"/>
    <property type="evidence" value="ECO:0007669"/>
    <property type="project" value="UniProtKB-UniRule"/>
</dbReference>
<dbReference type="CDD" id="cd07571">
    <property type="entry name" value="ALP_N-acyl_transferase"/>
    <property type="match status" value="1"/>
</dbReference>
<dbReference type="Gene3D" id="3.60.110.10">
    <property type="entry name" value="Carbon-nitrogen hydrolase"/>
    <property type="match status" value="1"/>
</dbReference>
<dbReference type="HAMAP" id="MF_01148">
    <property type="entry name" value="Lnt"/>
    <property type="match status" value="1"/>
</dbReference>
<dbReference type="InterPro" id="IPR004563">
    <property type="entry name" value="Apolipo_AcylTrfase"/>
</dbReference>
<dbReference type="InterPro" id="IPR003010">
    <property type="entry name" value="C-N_Hydrolase"/>
</dbReference>
<dbReference type="InterPro" id="IPR036526">
    <property type="entry name" value="C-N_Hydrolase_sf"/>
</dbReference>
<dbReference type="InterPro" id="IPR045378">
    <property type="entry name" value="LNT_N"/>
</dbReference>
<dbReference type="NCBIfam" id="TIGR00546">
    <property type="entry name" value="lnt"/>
    <property type="match status" value="1"/>
</dbReference>
<dbReference type="PANTHER" id="PTHR38686">
    <property type="entry name" value="APOLIPOPROTEIN N-ACYLTRANSFERASE"/>
    <property type="match status" value="1"/>
</dbReference>
<dbReference type="PANTHER" id="PTHR38686:SF1">
    <property type="entry name" value="APOLIPOPROTEIN N-ACYLTRANSFERASE"/>
    <property type="match status" value="1"/>
</dbReference>
<dbReference type="Pfam" id="PF00795">
    <property type="entry name" value="CN_hydrolase"/>
    <property type="match status" value="1"/>
</dbReference>
<dbReference type="Pfam" id="PF20154">
    <property type="entry name" value="LNT_N"/>
    <property type="match status" value="1"/>
</dbReference>
<dbReference type="SUPFAM" id="SSF56317">
    <property type="entry name" value="Carbon-nitrogen hydrolase"/>
    <property type="match status" value="1"/>
</dbReference>
<dbReference type="PROSITE" id="PS50263">
    <property type="entry name" value="CN_HYDROLASE"/>
    <property type="match status" value="1"/>
</dbReference>
<sequence length="505" mass="56529">MNLVNPSILVACILSFCLGAIGCLAFSPFDIWLIAYLSAAGLIWAATLVERKTAMLATFAWSIGYFGVGVQWVNVSMTQFGGVPVIVSYLAVLLLASYLGLYNLLFSYLARRFGLISPFVLASLFTFTEYLRGVVFTGFPWLQFGYTQIDSPFAQLAPIFGVEGLTFLVILLSSYLVDIVKNPTRKIATFTKIAVIIGFSLASNLLQFVQIDQQKPPVKVALIQANIEQQLKWDPAHFENTLRTYQQLINSSLAENEVIILPESAIPALESKINPLLNQLQKMAAAKNTEIIIGTLYENEQQQLFNSALVLGNQTKPYQLHQSLRYNKHHLVPFGEYVPFGSLLDWMREVFILPVNLAKGPFIQPALFTNKGKFNMAICYEVIFGHQLQQNQLAQQADYLITITNDAWFGDSIGPWQHLQMARMRALELGKPLLRAANTGITAVVGFDGKVIKKLPQFETNTLTAEIATTKGHTLFGQFGHWLIYSLSFICVAFGLFRRQKHKKH</sequence>
<comment type="function">
    <text evidence="1">Catalyzes the phospholipid dependent N-acylation of the N-terminal cysteine of apolipoprotein, the last step in lipoprotein maturation.</text>
</comment>
<comment type="catalytic activity">
    <reaction evidence="1">
        <text>N-terminal S-1,2-diacyl-sn-glyceryl-L-cysteinyl-[lipoprotein] + a glycerophospholipid = N-acyl-S-1,2-diacyl-sn-glyceryl-L-cysteinyl-[lipoprotein] + a 2-acyl-sn-glycero-3-phospholipid + H(+)</text>
        <dbReference type="Rhea" id="RHEA:48228"/>
        <dbReference type="Rhea" id="RHEA-COMP:14681"/>
        <dbReference type="Rhea" id="RHEA-COMP:14684"/>
        <dbReference type="ChEBI" id="CHEBI:15378"/>
        <dbReference type="ChEBI" id="CHEBI:136912"/>
        <dbReference type="ChEBI" id="CHEBI:140656"/>
        <dbReference type="ChEBI" id="CHEBI:140657"/>
        <dbReference type="ChEBI" id="CHEBI:140660"/>
        <dbReference type="EC" id="2.3.1.269"/>
    </reaction>
</comment>
<comment type="pathway">
    <text evidence="1">Protein modification; lipoprotein biosynthesis (N-acyl transfer).</text>
</comment>
<comment type="subcellular location">
    <subcellularLocation>
        <location evidence="1">Cell inner membrane</location>
        <topology evidence="1">Multi-pass membrane protein</topology>
    </subcellularLocation>
</comment>
<comment type="similarity">
    <text evidence="1">Belongs to the CN hydrolase family. Apolipoprotein N-acyltransferase subfamily.</text>
</comment>
<protein>
    <recommendedName>
        <fullName evidence="1">Apolipoprotein N-acyltransferase</fullName>
        <shortName evidence="1">ALP N-acyltransferase</shortName>
        <ecNumber evidence="1">2.3.1.269</ecNumber>
    </recommendedName>
</protein>
<proteinExistence type="inferred from homology"/>
<gene>
    <name evidence="1" type="primary">lnt</name>
    <name type="ordered locus">HD_1144</name>
</gene>
<feature type="chain" id="PRO_0000178067" description="Apolipoprotein N-acyltransferase">
    <location>
        <begin position="1"/>
        <end position="505"/>
    </location>
</feature>
<feature type="transmembrane region" description="Helical" evidence="1">
    <location>
        <begin position="6"/>
        <end position="26"/>
    </location>
</feature>
<feature type="transmembrane region" description="Helical" evidence="1">
    <location>
        <begin position="29"/>
        <end position="49"/>
    </location>
</feature>
<feature type="transmembrane region" description="Helical" evidence="1">
    <location>
        <begin position="53"/>
        <end position="73"/>
    </location>
</feature>
<feature type="transmembrane region" description="Helical" evidence="1">
    <location>
        <begin position="80"/>
        <end position="100"/>
    </location>
</feature>
<feature type="transmembrane region" description="Helical" evidence="1">
    <location>
        <begin position="119"/>
        <end position="139"/>
    </location>
</feature>
<feature type="transmembrane region" description="Helical" evidence="1">
    <location>
        <begin position="152"/>
        <end position="172"/>
    </location>
</feature>
<feature type="transmembrane region" description="Helical" evidence="1">
    <location>
        <begin position="189"/>
        <end position="209"/>
    </location>
</feature>
<feature type="transmembrane region" description="Helical" evidence="1">
    <location>
        <begin position="475"/>
        <end position="495"/>
    </location>
</feature>
<feature type="domain" description="CN hydrolase" evidence="1">
    <location>
        <begin position="223"/>
        <end position="469"/>
    </location>
</feature>
<feature type="active site" description="Proton acceptor" evidence="1">
    <location>
        <position position="263"/>
    </location>
</feature>
<feature type="active site" evidence="1">
    <location>
        <position position="328"/>
    </location>
</feature>
<feature type="active site" description="Nucleophile" evidence="1">
    <location>
        <position position="379"/>
    </location>
</feature>